<comment type="subcellular location">
    <subcellularLocation>
        <location evidence="1">Cell membrane</location>
        <topology evidence="1">Multi-pass membrane protein</topology>
    </subcellularLocation>
</comment>
<comment type="similarity">
    <text evidence="1">Belongs to the UPF0756 family.</text>
</comment>
<accession>Q6HCT7</accession>
<name>Y4324_BACHK</name>
<feature type="chain" id="PRO_0000388836" description="UPF0756 membrane protein BT9727_4324">
    <location>
        <begin position="1"/>
        <end position="153"/>
    </location>
</feature>
<feature type="transmembrane region" description="Helical" evidence="1">
    <location>
        <begin position="8"/>
        <end position="28"/>
    </location>
</feature>
<feature type="transmembrane region" description="Helical" evidence="1">
    <location>
        <begin position="54"/>
        <end position="74"/>
    </location>
</feature>
<feature type="transmembrane region" description="Helical" evidence="1">
    <location>
        <begin position="87"/>
        <end position="107"/>
    </location>
</feature>
<feature type="transmembrane region" description="Helical" evidence="1">
    <location>
        <begin position="117"/>
        <end position="137"/>
    </location>
</feature>
<protein>
    <recommendedName>
        <fullName evidence="1">UPF0756 membrane protein BT9727_4324</fullName>
    </recommendedName>
</protein>
<proteinExistence type="inferred from homology"/>
<gene>
    <name type="ordered locus">BT9727_4324</name>
</gene>
<reference key="1">
    <citation type="journal article" date="2006" name="J. Bacteriol.">
        <title>Pathogenomic sequence analysis of Bacillus cereus and Bacillus thuringiensis isolates closely related to Bacillus anthracis.</title>
        <authorList>
            <person name="Han C.S."/>
            <person name="Xie G."/>
            <person name="Challacombe J.F."/>
            <person name="Altherr M.R."/>
            <person name="Bhotika S.S."/>
            <person name="Bruce D."/>
            <person name="Campbell C.S."/>
            <person name="Campbell M.L."/>
            <person name="Chen J."/>
            <person name="Chertkov O."/>
            <person name="Cleland C."/>
            <person name="Dimitrijevic M."/>
            <person name="Doggett N.A."/>
            <person name="Fawcett J.J."/>
            <person name="Glavina T."/>
            <person name="Goodwin L.A."/>
            <person name="Hill K.K."/>
            <person name="Hitchcock P."/>
            <person name="Jackson P.J."/>
            <person name="Keim P."/>
            <person name="Kewalramani A.R."/>
            <person name="Longmire J."/>
            <person name="Lucas S."/>
            <person name="Malfatti S."/>
            <person name="McMurry K."/>
            <person name="Meincke L.J."/>
            <person name="Misra M."/>
            <person name="Moseman B.L."/>
            <person name="Mundt M."/>
            <person name="Munk A.C."/>
            <person name="Okinaka R.T."/>
            <person name="Parson-Quintana B."/>
            <person name="Reilly L.P."/>
            <person name="Richardson P."/>
            <person name="Robinson D.L."/>
            <person name="Rubin E."/>
            <person name="Saunders E."/>
            <person name="Tapia R."/>
            <person name="Tesmer J.G."/>
            <person name="Thayer N."/>
            <person name="Thompson L.S."/>
            <person name="Tice H."/>
            <person name="Ticknor L.O."/>
            <person name="Wills P.L."/>
            <person name="Brettin T.S."/>
            <person name="Gilna P."/>
        </authorList>
    </citation>
    <scope>NUCLEOTIDE SEQUENCE [LARGE SCALE GENOMIC DNA]</scope>
    <source>
        <strain>97-27</strain>
    </source>
</reference>
<evidence type="ECO:0000255" key="1">
    <source>
        <dbReference type="HAMAP-Rule" id="MF_01874"/>
    </source>
</evidence>
<sequence length="153" mass="15998">MISQSTLFLFILLIIGLIAKNQSLTVAIGVLFLLKFTFLGDKVFPYLQTKGINLGVTVITIAVLVPIATGEIGFKQLGEAAKSYYAWIALASGVAVALLAKGGVQLLTTDPHITTALVFGTIIAVALFNGVAVGPLIGAGIAYAVMSIIQMFK</sequence>
<keyword id="KW-1003">Cell membrane</keyword>
<keyword id="KW-0472">Membrane</keyword>
<keyword id="KW-0812">Transmembrane</keyword>
<keyword id="KW-1133">Transmembrane helix</keyword>
<dbReference type="EMBL" id="AE017355">
    <property type="protein sequence ID" value="AAT63548.1"/>
    <property type="molecule type" value="Genomic_DNA"/>
</dbReference>
<dbReference type="RefSeq" id="WP_000625507.1">
    <property type="nucleotide sequence ID" value="NC_005957.1"/>
</dbReference>
<dbReference type="RefSeq" id="YP_038639.1">
    <property type="nucleotide sequence ID" value="NC_005957.1"/>
</dbReference>
<dbReference type="KEGG" id="btk:BT9727_4324"/>
<dbReference type="PATRIC" id="fig|281309.8.peg.4610"/>
<dbReference type="HOGENOM" id="CLU_125889_1_0_9"/>
<dbReference type="PRO" id="PR:Q6HCT7"/>
<dbReference type="Proteomes" id="UP000001301">
    <property type="component" value="Chromosome"/>
</dbReference>
<dbReference type="GO" id="GO:0005886">
    <property type="term" value="C:plasma membrane"/>
    <property type="evidence" value="ECO:0007669"/>
    <property type="project" value="UniProtKB-SubCell"/>
</dbReference>
<dbReference type="HAMAP" id="MF_01874">
    <property type="entry name" value="UPF0756"/>
    <property type="match status" value="1"/>
</dbReference>
<dbReference type="InterPro" id="IPR007382">
    <property type="entry name" value="UPF0756_TM"/>
</dbReference>
<dbReference type="PANTHER" id="PTHR38452">
    <property type="entry name" value="UPF0756 MEMBRANE PROTEIN YEAL"/>
    <property type="match status" value="1"/>
</dbReference>
<dbReference type="PANTHER" id="PTHR38452:SF1">
    <property type="entry name" value="UPF0756 MEMBRANE PROTEIN YEAL"/>
    <property type="match status" value="1"/>
</dbReference>
<dbReference type="Pfam" id="PF04284">
    <property type="entry name" value="DUF441"/>
    <property type="match status" value="1"/>
</dbReference>
<organism>
    <name type="scientific">Bacillus thuringiensis subsp. konkukian (strain 97-27)</name>
    <dbReference type="NCBI Taxonomy" id="281309"/>
    <lineage>
        <taxon>Bacteria</taxon>
        <taxon>Bacillati</taxon>
        <taxon>Bacillota</taxon>
        <taxon>Bacilli</taxon>
        <taxon>Bacillales</taxon>
        <taxon>Bacillaceae</taxon>
        <taxon>Bacillus</taxon>
        <taxon>Bacillus cereus group</taxon>
    </lineage>
</organism>